<keyword id="KW-0687">Ribonucleoprotein</keyword>
<keyword id="KW-0689">Ribosomal protein</keyword>
<name>RL17_XANC8</name>
<feature type="chain" id="PRO_0000267970" description="Large ribosomal subunit protein bL17">
    <location>
        <begin position="1"/>
        <end position="127"/>
    </location>
</feature>
<accession>Q4URG4</accession>
<evidence type="ECO:0000255" key="1">
    <source>
        <dbReference type="HAMAP-Rule" id="MF_01368"/>
    </source>
</evidence>
<evidence type="ECO:0000305" key="2"/>
<dbReference type="EMBL" id="CP000050">
    <property type="protein sequence ID" value="AAY50359.1"/>
    <property type="molecule type" value="Genomic_DNA"/>
</dbReference>
<dbReference type="RefSeq" id="WP_011036134.1">
    <property type="nucleotide sequence ID" value="NZ_CP155948.1"/>
</dbReference>
<dbReference type="SMR" id="Q4URG4"/>
<dbReference type="GeneID" id="58014504"/>
<dbReference type="KEGG" id="xcb:XC_3315"/>
<dbReference type="HOGENOM" id="CLU_074407_2_0_6"/>
<dbReference type="Proteomes" id="UP000000420">
    <property type="component" value="Chromosome"/>
</dbReference>
<dbReference type="GO" id="GO:0022625">
    <property type="term" value="C:cytosolic large ribosomal subunit"/>
    <property type="evidence" value="ECO:0007669"/>
    <property type="project" value="TreeGrafter"/>
</dbReference>
<dbReference type="GO" id="GO:0003735">
    <property type="term" value="F:structural constituent of ribosome"/>
    <property type="evidence" value="ECO:0007669"/>
    <property type="project" value="InterPro"/>
</dbReference>
<dbReference type="GO" id="GO:0006412">
    <property type="term" value="P:translation"/>
    <property type="evidence" value="ECO:0007669"/>
    <property type="project" value="UniProtKB-UniRule"/>
</dbReference>
<dbReference type="FunFam" id="3.90.1030.10:FF:000001">
    <property type="entry name" value="50S ribosomal protein L17"/>
    <property type="match status" value="1"/>
</dbReference>
<dbReference type="Gene3D" id="3.90.1030.10">
    <property type="entry name" value="Ribosomal protein L17"/>
    <property type="match status" value="1"/>
</dbReference>
<dbReference type="HAMAP" id="MF_01368">
    <property type="entry name" value="Ribosomal_bL17"/>
    <property type="match status" value="1"/>
</dbReference>
<dbReference type="InterPro" id="IPR000456">
    <property type="entry name" value="Ribosomal_bL17"/>
</dbReference>
<dbReference type="InterPro" id="IPR047859">
    <property type="entry name" value="Ribosomal_bL17_CS"/>
</dbReference>
<dbReference type="InterPro" id="IPR036373">
    <property type="entry name" value="Ribosomal_bL17_sf"/>
</dbReference>
<dbReference type="NCBIfam" id="TIGR00059">
    <property type="entry name" value="L17"/>
    <property type="match status" value="1"/>
</dbReference>
<dbReference type="PANTHER" id="PTHR14413:SF16">
    <property type="entry name" value="LARGE RIBOSOMAL SUBUNIT PROTEIN BL17M"/>
    <property type="match status" value="1"/>
</dbReference>
<dbReference type="PANTHER" id="PTHR14413">
    <property type="entry name" value="RIBOSOMAL PROTEIN L17"/>
    <property type="match status" value="1"/>
</dbReference>
<dbReference type="Pfam" id="PF01196">
    <property type="entry name" value="Ribosomal_L17"/>
    <property type="match status" value="1"/>
</dbReference>
<dbReference type="SUPFAM" id="SSF64263">
    <property type="entry name" value="Prokaryotic ribosomal protein L17"/>
    <property type="match status" value="1"/>
</dbReference>
<dbReference type="PROSITE" id="PS01167">
    <property type="entry name" value="RIBOSOMAL_L17"/>
    <property type="match status" value="1"/>
</dbReference>
<proteinExistence type="inferred from homology"/>
<protein>
    <recommendedName>
        <fullName evidence="1">Large ribosomal subunit protein bL17</fullName>
    </recommendedName>
    <alternativeName>
        <fullName evidence="2">50S ribosomal protein L17</fullName>
    </alternativeName>
</protein>
<reference key="1">
    <citation type="journal article" date="2005" name="Genome Res.">
        <title>Comparative and functional genomic analyses of the pathogenicity of phytopathogen Xanthomonas campestris pv. campestris.</title>
        <authorList>
            <person name="Qian W."/>
            <person name="Jia Y."/>
            <person name="Ren S.-X."/>
            <person name="He Y.-Q."/>
            <person name="Feng J.-X."/>
            <person name="Lu L.-F."/>
            <person name="Sun Q."/>
            <person name="Ying G."/>
            <person name="Tang D.-J."/>
            <person name="Tang H."/>
            <person name="Wu W."/>
            <person name="Hao P."/>
            <person name="Wang L."/>
            <person name="Jiang B.-L."/>
            <person name="Zeng S."/>
            <person name="Gu W.-Y."/>
            <person name="Lu G."/>
            <person name="Rong L."/>
            <person name="Tian Y."/>
            <person name="Yao Z."/>
            <person name="Fu G."/>
            <person name="Chen B."/>
            <person name="Fang R."/>
            <person name="Qiang B."/>
            <person name="Chen Z."/>
            <person name="Zhao G.-P."/>
            <person name="Tang J.-L."/>
            <person name="He C."/>
        </authorList>
    </citation>
    <scope>NUCLEOTIDE SEQUENCE [LARGE SCALE GENOMIC DNA]</scope>
    <source>
        <strain>8004</strain>
    </source>
</reference>
<sequence>MRHQKSGRKFNRTSAHREAMFRNMAASLFKHELIKTTLPKAKELRRVAEPLITIGKVDGVANRRLAFARLRDKEAVGKLFVELGPRYATRPGGYLRILKAGFRAGDNAPMAYVELVDRPVVAEEVSE</sequence>
<comment type="subunit">
    <text evidence="1">Part of the 50S ribosomal subunit. Contacts protein L32.</text>
</comment>
<comment type="similarity">
    <text evidence="1">Belongs to the bacterial ribosomal protein bL17 family.</text>
</comment>
<gene>
    <name evidence="1" type="primary">rplQ</name>
    <name type="ordered locus">XC_3315</name>
</gene>
<organism>
    <name type="scientific">Xanthomonas campestris pv. campestris (strain 8004)</name>
    <dbReference type="NCBI Taxonomy" id="314565"/>
    <lineage>
        <taxon>Bacteria</taxon>
        <taxon>Pseudomonadati</taxon>
        <taxon>Pseudomonadota</taxon>
        <taxon>Gammaproteobacteria</taxon>
        <taxon>Lysobacterales</taxon>
        <taxon>Lysobacteraceae</taxon>
        <taxon>Xanthomonas</taxon>
    </lineage>
</organism>